<gene>
    <name evidence="1" type="primary">hisF</name>
    <name type="ordered locus">MRA_1615</name>
</gene>
<evidence type="ECO:0000255" key="1">
    <source>
        <dbReference type="HAMAP-Rule" id="MF_01013"/>
    </source>
</evidence>
<feature type="chain" id="PRO_1000063098" description="Imidazole glycerol phosphate synthase subunit HisF">
    <location>
        <begin position="1"/>
        <end position="267"/>
    </location>
</feature>
<feature type="active site" evidence="1">
    <location>
        <position position="22"/>
    </location>
</feature>
<feature type="active site" evidence="1">
    <location>
        <position position="141"/>
    </location>
</feature>
<organism>
    <name type="scientific">Mycobacterium tuberculosis (strain ATCC 25177 / H37Ra)</name>
    <dbReference type="NCBI Taxonomy" id="419947"/>
    <lineage>
        <taxon>Bacteria</taxon>
        <taxon>Bacillati</taxon>
        <taxon>Actinomycetota</taxon>
        <taxon>Actinomycetes</taxon>
        <taxon>Mycobacteriales</taxon>
        <taxon>Mycobacteriaceae</taxon>
        <taxon>Mycobacterium</taxon>
        <taxon>Mycobacterium tuberculosis complex</taxon>
    </lineage>
</organism>
<proteinExistence type="inferred from homology"/>
<accession>A5U2W1</accession>
<reference key="1">
    <citation type="journal article" date="2008" name="PLoS ONE">
        <title>Genetic basis of virulence attenuation revealed by comparative genomic analysis of Mycobacterium tuberculosis strain H37Ra versus H37Rv.</title>
        <authorList>
            <person name="Zheng H."/>
            <person name="Lu L."/>
            <person name="Wang B."/>
            <person name="Pu S."/>
            <person name="Zhang X."/>
            <person name="Zhu G."/>
            <person name="Shi W."/>
            <person name="Zhang L."/>
            <person name="Wang H."/>
            <person name="Wang S."/>
            <person name="Zhao G."/>
            <person name="Zhang Y."/>
        </authorList>
    </citation>
    <scope>NUCLEOTIDE SEQUENCE [LARGE SCALE GENOMIC DNA]</scope>
    <source>
        <strain>ATCC 25177 / H37Ra</strain>
    </source>
</reference>
<dbReference type="EC" id="4.3.2.10" evidence="1"/>
<dbReference type="EMBL" id="CP000611">
    <property type="protein sequence ID" value="ABQ73361.1"/>
    <property type="molecule type" value="Genomic_DNA"/>
</dbReference>
<dbReference type="RefSeq" id="WP_003898942.1">
    <property type="nucleotide sequence ID" value="NZ_CP016972.1"/>
</dbReference>
<dbReference type="SMR" id="A5U2W1"/>
<dbReference type="GeneID" id="45425573"/>
<dbReference type="KEGG" id="mra:MRA_1615"/>
<dbReference type="eggNOG" id="COG0107">
    <property type="taxonomic scope" value="Bacteria"/>
</dbReference>
<dbReference type="HOGENOM" id="CLU_048577_4_0_11"/>
<dbReference type="UniPathway" id="UPA00031">
    <property type="reaction ID" value="UER00010"/>
</dbReference>
<dbReference type="Proteomes" id="UP000001988">
    <property type="component" value="Chromosome"/>
</dbReference>
<dbReference type="GO" id="GO:0005737">
    <property type="term" value="C:cytoplasm"/>
    <property type="evidence" value="ECO:0007669"/>
    <property type="project" value="UniProtKB-SubCell"/>
</dbReference>
<dbReference type="GO" id="GO:0000107">
    <property type="term" value="F:imidazoleglycerol-phosphate synthase activity"/>
    <property type="evidence" value="ECO:0007669"/>
    <property type="project" value="UniProtKB-UniRule"/>
</dbReference>
<dbReference type="GO" id="GO:0016829">
    <property type="term" value="F:lyase activity"/>
    <property type="evidence" value="ECO:0007669"/>
    <property type="project" value="UniProtKB-KW"/>
</dbReference>
<dbReference type="GO" id="GO:0000105">
    <property type="term" value="P:L-histidine biosynthetic process"/>
    <property type="evidence" value="ECO:0007669"/>
    <property type="project" value="UniProtKB-UniRule"/>
</dbReference>
<dbReference type="CDD" id="cd04731">
    <property type="entry name" value="HisF"/>
    <property type="match status" value="1"/>
</dbReference>
<dbReference type="FunFam" id="3.20.20.70:FF:000006">
    <property type="entry name" value="Imidazole glycerol phosphate synthase subunit HisF"/>
    <property type="match status" value="1"/>
</dbReference>
<dbReference type="Gene3D" id="3.20.20.70">
    <property type="entry name" value="Aldolase class I"/>
    <property type="match status" value="1"/>
</dbReference>
<dbReference type="HAMAP" id="MF_01013">
    <property type="entry name" value="HisF"/>
    <property type="match status" value="1"/>
</dbReference>
<dbReference type="InterPro" id="IPR013785">
    <property type="entry name" value="Aldolase_TIM"/>
</dbReference>
<dbReference type="InterPro" id="IPR006062">
    <property type="entry name" value="His_biosynth"/>
</dbReference>
<dbReference type="InterPro" id="IPR004651">
    <property type="entry name" value="HisF"/>
</dbReference>
<dbReference type="InterPro" id="IPR050064">
    <property type="entry name" value="IGPS_HisA/HisF"/>
</dbReference>
<dbReference type="InterPro" id="IPR011060">
    <property type="entry name" value="RibuloseP-bd_barrel"/>
</dbReference>
<dbReference type="NCBIfam" id="TIGR00735">
    <property type="entry name" value="hisF"/>
    <property type="match status" value="1"/>
</dbReference>
<dbReference type="PANTHER" id="PTHR21235:SF2">
    <property type="entry name" value="IMIDAZOLE GLYCEROL PHOSPHATE SYNTHASE HISHF"/>
    <property type="match status" value="1"/>
</dbReference>
<dbReference type="PANTHER" id="PTHR21235">
    <property type="entry name" value="IMIDAZOLE GLYCEROL PHOSPHATE SYNTHASE SUBUNIT HISF/H IGP SYNTHASE SUBUNIT HISF/H"/>
    <property type="match status" value="1"/>
</dbReference>
<dbReference type="Pfam" id="PF00977">
    <property type="entry name" value="His_biosynth"/>
    <property type="match status" value="1"/>
</dbReference>
<dbReference type="SUPFAM" id="SSF51366">
    <property type="entry name" value="Ribulose-phoshate binding barrel"/>
    <property type="match status" value="1"/>
</dbReference>
<protein>
    <recommendedName>
        <fullName evidence="1">Imidazole glycerol phosphate synthase subunit HisF</fullName>
        <ecNumber evidence="1">4.3.2.10</ecNumber>
    </recommendedName>
    <alternativeName>
        <fullName evidence="1">IGP synthase cyclase subunit</fullName>
    </alternativeName>
    <alternativeName>
        <fullName evidence="1">IGP synthase subunit HisF</fullName>
    </alternativeName>
    <alternativeName>
        <fullName evidence="1">ImGP synthase subunit HisF</fullName>
        <shortName evidence="1">IGPS subunit HisF</shortName>
    </alternativeName>
</protein>
<keyword id="KW-0028">Amino-acid biosynthesis</keyword>
<keyword id="KW-0963">Cytoplasm</keyword>
<keyword id="KW-0368">Histidine biosynthesis</keyword>
<keyword id="KW-0456">Lyase</keyword>
<keyword id="KW-1185">Reference proteome</keyword>
<name>HIS6_MYCTA</name>
<comment type="function">
    <text evidence="1">IGPS catalyzes the conversion of PRFAR and glutamine to IGP, AICAR and glutamate. The HisF subunit catalyzes the cyclization activity that produces IGP and AICAR from PRFAR using the ammonia provided by the HisH subunit.</text>
</comment>
<comment type="catalytic activity">
    <reaction evidence="1">
        <text>5-[(5-phospho-1-deoxy-D-ribulos-1-ylimino)methylamino]-1-(5-phospho-beta-D-ribosyl)imidazole-4-carboxamide + L-glutamine = D-erythro-1-(imidazol-4-yl)glycerol 3-phosphate + 5-amino-1-(5-phospho-beta-D-ribosyl)imidazole-4-carboxamide + L-glutamate + H(+)</text>
        <dbReference type="Rhea" id="RHEA:24793"/>
        <dbReference type="ChEBI" id="CHEBI:15378"/>
        <dbReference type="ChEBI" id="CHEBI:29985"/>
        <dbReference type="ChEBI" id="CHEBI:58278"/>
        <dbReference type="ChEBI" id="CHEBI:58359"/>
        <dbReference type="ChEBI" id="CHEBI:58475"/>
        <dbReference type="ChEBI" id="CHEBI:58525"/>
        <dbReference type="EC" id="4.3.2.10"/>
    </reaction>
</comment>
<comment type="pathway">
    <text evidence="1">Amino-acid biosynthesis; L-histidine biosynthesis; L-histidine from 5-phospho-alpha-D-ribose 1-diphosphate: step 5/9.</text>
</comment>
<comment type="subunit">
    <text evidence="1">Heterodimer of HisH and HisF.</text>
</comment>
<comment type="subcellular location">
    <subcellularLocation>
        <location evidence="1">Cytoplasm</location>
    </subcellularLocation>
</comment>
<comment type="similarity">
    <text evidence="1">Belongs to the HisA/HisF family.</text>
</comment>
<sequence>MYADRDLPGAGGLAVRVIPCLDVDDGRVVKGVNFENLRDAGDPVELAAVYDAEGADELTFLDVTASSSGRATMLEVVRRTAEQVFIPLTVGGGVRTVADVDSLLRAGADKVAVNTAAIACPDLLADMARQFGSQCIVLSVDARTVPVGSAPTPSGWEVTTHGGRRGTGMDAVQWAARGADLGVGEILLNSMDADGTKAGFDLALLRAVRAAVTVPVIASGGAGAVEHFAPAVAAGADAVLAASVFHFRELTIGQVKAALAAEGITVR</sequence>